<proteinExistence type="evidence at protein level"/>
<name>NIG2B_ODOIS</name>
<keyword id="KW-0878">Amphibian defense peptide</keyword>
<keyword id="KW-0044">Antibiotic</keyword>
<keyword id="KW-0929">Antimicrobial</keyword>
<keyword id="KW-0165">Cleavage on pair of basic residues</keyword>
<keyword id="KW-0903">Direct protein sequencing</keyword>
<keyword id="KW-1015">Disulfide bond</keyword>
<keyword id="KW-0295">Fungicide</keyword>
<keyword id="KW-0964">Secreted</keyword>
<keyword id="KW-0732">Signal</keyword>
<comment type="function">
    <text evidence="3">Has antimicrobial activity against Gram-negative bacterium E.coli ATCC 8739 (MIC=50 ug), against Gram positive bacteria S.aureus ATCC 6538 (MIC=3.1 ug), methicillin-resistant S.aureus ATCC 43300 (MIC=12.5 ug), B.subtilis ATCC 6633 (MIC=12.5 ug) and against fungus C.albicans ATCC 90028 (MIC=50 ug).</text>
</comment>
<comment type="subcellular location">
    <subcellularLocation>
        <location evidence="6">Secreted</location>
    </subcellularLocation>
</comment>
<comment type="tissue specificity">
    <text evidence="6">Expressed by the skin glands.</text>
</comment>
<comment type="mass spectrometry" mass="2006.5" method="MALDI" evidence="3"/>
<comment type="similarity">
    <text evidence="5">Belongs to the frog skin active peptide (FSAP) family. Brevinin subfamily.</text>
</comment>
<protein>
    <recommendedName>
        <fullName evidence="4">Nigrocin-2ISb</fullName>
    </recommendedName>
</protein>
<dbReference type="EMBL" id="AB602059">
    <property type="protein sequence ID" value="BAK08589.1"/>
    <property type="molecule type" value="mRNA"/>
</dbReference>
<dbReference type="GO" id="GO:0005576">
    <property type="term" value="C:extracellular region"/>
    <property type="evidence" value="ECO:0000314"/>
    <property type="project" value="UniProtKB"/>
</dbReference>
<dbReference type="GO" id="GO:0050832">
    <property type="term" value="P:defense response to fungus"/>
    <property type="evidence" value="ECO:0000314"/>
    <property type="project" value="UniProtKB"/>
</dbReference>
<dbReference type="GO" id="GO:0050829">
    <property type="term" value="P:defense response to Gram-negative bacterium"/>
    <property type="evidence" value="ECO:0000314"/>
    <property type="project" value="UniProtKB"/>
</dbReference>
<dbReference type="GO" id="GO:0050830">
    <property type="term" value="P:defense response to Gram-positive bacterium"/>
    <property type="evidence" value="ECO:0000314"/>
    <property type="project" value="UniProtKB"/>
</dbReference>
<dbReference type="GO" id="GO:0031640">
    <property type="term" value="P:killing of cells of another organism"/>
    <property type="evidence" value="ECO:0007669"/>
    <property type="project" value="UniProtKB-KW"/>
</dbReference>
<dbReference type="InterPro" id="IPR004275">
    <property type="entry name" value="Frog_antimicrobial_propeptide"/>
</dbReference>
<dbReference type="InterPro" id="IPR032749">
    <property type="entry name" value="Nigrocin"/>
</dbReference>
<dbReference type="Pfam" id="PF16047">
    <property type="entry name" value="Antimicrobial22"/>
    <property type="match status" value="1"/>
</dbReference>
<dbReference type="Pfam" id="PF03032">
    <property type="entry name" value="FSAP_sig_propep"/>
    <property type="match status" value="1"/>
</dbReference>
<feature type="signal peptide" evidence="2">
    <location>
        <begin position="1"/>
        <end position="22"/>
    </location>
</feature>
<feature type="propeptide" id="PRO_0000439615" description="Removed in mature form" evidence="6">
    <location>
        <begin position="23"/>
        <end position="43"/>
    </location>
</feature>
<feature type="peptide" id="PRO_0000439616" description="Nigrocin-2ISb" evidence="3">
    <location>
        <begin position="46"/>
        <end position="66"/>
    </location>
</feature>
<feature type="disulfide bond" evidence="1">
    <location>
        <begin position="60"/>
        <end position="66"/>
    </location>
</feature>
<sequence length="66" mass="7412">MFTLKKSMLLLFFLGTINLSLCQEERDAEEERRDEDNAKMEEIKRGILGTVFKAGKGIVCGLTGLC</sequence>
<accession>F1T157</accession>
<evidence type="ECO:0000250" key="1">
    <source>
        <dbReference type="UniProtKB" id="P39084"/>
    </source>
</evidence>
<evidence type="ECO:0000255" key="2"/>
<evidence type="ECO:0000269" key="3">
    <source>
    </source>
</evidence>
<evidence type="ECO:0000303" key="4">
    <source>
    </source>
</evidence>
<evidence type="ECO:0000305" key="5"/>
<evidence type="ECO:0000305" key="6">
    <source>
    </source>
</evidence>
<evidence type="ECO:0000312" key="7">
    <source>
        <dbReference type="EMBL" id="BAK08589.1"/>
    </source>
</evidence>
<organism evidence="4">
    <name type="scientific">Odorrana ishikawae</name>
    <name type="common">Ishikawa's frog</name>
    <name type="synonym">Rana ishikawae</name>
    <dbReference type="NCBI Taxonomy" id="310659"/>
    <lineage>
        <taxon>Eukaryota</taxon>
        <taxon>Metazoa</taxon>
        <taxon>Chordata</taxon>
        <taxon>Craniata</taxon>
        <taxon>Vertebrata</taxon>
        <taxon>Euteleostomi</taxon>
        <taxon>Amphibia</taxon>
        <taxon>Batrachia</taxon>
        <taxon>Anura</taxon>
        <taxon>Neobatrachia</taxon>
        <taxon>Ranoidea</taxon>
        <taxon>Ranidae</taxon>
        <taxon>Odorrana</taxon>
    </lineage>
</organism>
<reference evidence="7" key="1">
    <citation type="journal article" date="2011" name="Peptides">
        <title>Identification and characterization of antimicrobial peptides from the skin of the endangered frog Odorrana ishikawae.</title>
        <authorList>
            <person name="Iwakoshi-Ukena E."/>
            <person name="Ukena K."/>
            <person name="Okimoto A."/>
            <person name="Soga M."/>
            <person name="Okada G."/>
            <person name="Sano N."/>
            <person name="Fujii T."/>
            <person name="Sugawara Y."/>
            <person name="Sumida M."/>
        </authorList>
    </citation>
    <scope>NUCLEOTIDE SEQUENCE [MRNA]</scope>
    <scope>PROTEIN SEQUENCE OF 46-66</scope>
    <scope>FUNCTION</scope>
    <scope>SYNTHESIS</scope>
    <scope>MASS SPECTROMETRY</scope>
    <source>
        <tissue evidence="4">Skin</tissue>
    </source>
</reference>